<gene>
    <name evidence="6" type="primary">OR</name>
</gene>
<accession>A2T1U1</accession>
<keyword id="KW-0150">Chloroplast</keyword>
<keyword id="KW-0472">Membrane</keyword>
<keyword id="KW-0539">Nucleus</keyword>
<keyword id="KW-0934">Plastid</keyword>
<keyword id="KW-0677">Repeat</keyword>
<keyword id="KW-0809">Transit peptide</keyword>
<keyword id="KW-0812">Transmembrane</keyword>
<keyword id="KW-1133">Transmembrane helix</keyword>
<comment type="function">
    <text evidence="2 3 4 5">Involved in chromoplast differentiation. Is associated with a cellular process that triggers the differentiation of pro-plastids or other non-colored plastids into chromoplasts for carotenoid accumulation (PubMed:17172359, PubMed:18256051). Associated with carotenoid accumulation in de-etiolated cotyledons (PubMed:23887833). Controls leaf petiole elongation by suppressing the expression of ERF1 genes (PubMed:21175633).</text>
</comment>
<comment type="subunit">
    <text evidence="4">Interacts with ERF1-2.</text>
</comment>
<comment type="subcellular location">
    <subcellularLocation>
        <location evidence="7">Plastid</location>
        <location evidence="7">Chloroplast membrane</location>
    </subcellularLocation>
    <subcellularLocation>
        <location evidence="2">Plastid</location>
    </subcellularLocation>
    <subcellularLocation>
        <location evidence="4">Nucleus</location>
    </subcellularLocation>
    <text evidence="2">Targeted to non-green plastids.</text>
</comment>
<comment type="tissue specificity">
    <text evidence="2">Expressed in young leaves, curds and flower buds.</text>
</comment>
<comment type="polymorphism">
    <text evidence="8">A probable gain-of-function mutant of OR gene confers the accumulation of high levels of beta-carotene in various tissues normally devoid of carotenoids, converting the white color of curd tissue into the distinct orange color. Hybrid OR cauliflower containing large amounts of beta-carotene is commercially available.</text>
</comment>
<comment type="miscellaneous">
    <text evidence="7">Its sequence is related to the DnaJ family but lacks the J domain. The CR-type-like region is similar to CR-type zinc-fingers.</text>
</comment>
<comment type="similarity">
    <text>Belongs to the orange-like family.</text>
</comment>
<protein>
    <recommendedName>
        <fullName evidence="7">Protein ORANGE, chloroplastic</fullName>
        <shortName evidence="7">BoOr</shortName>
    </recommendedName>
    <alternativeName>
        <fullName evidence="6">DnaJ-like cysteine-rich domain-containing protein Or</fullName>
    </alternativeName>
</protein>
<dbReference type="EMBL" id="DQ482456">
    <property type="protein sequence ID" value="ABH07405.1"/>
    <property type="molecule type" value="mRNA"/>
</dbReference>
<dbReference type="GO" id="GO:0031969">
    <property type="term" value="C:chloroplast membrane"/>
    <property type="evidence" value="ECO:0007669"/>
    <property type="project" value="UniProtKB-SubCell"/>
</dbReference>
<dbReference type="GO" id="GO:0005634">
    <property type="term" value="C:nucleus"/>
    <property type="evidence" value="ECO:0007669"/>
    <property type="project" value="UniProtKB-SubCell"/>
</dbReference>
<dbReference type="GO" id="GO:0009661">
    <property type="term" value="P:chromoplast organization"/>
    <property type="evidence" value="ECO:0000315"/>
    <property type="project" value="UniProtKB"/>
</dbReference>
<dbReference type="GO" id="GO:1904143">
    <property type="term" value="P:positive regulation of carotenoid biosynthetic process"/>
    <property type="evidence" value="ECO:0000315"/>
    <property type="project" value="UniProtKB"/>
</dbReference>
<dbReference type="GO" id="GO:0009826">
    <property type="term" value="P:unidimensional cell growth"/>
    <property type="evidence" value="ECO:0000315"/>
    <property type="project" value="UniProtKB"/>
</dbReference>
<dbReference type="PANTHER" id="PTHR15852">
    <property type="entry name" value="PLASTID TRANSCRIPTIONALLY ACTIVE PROTEIN"/>
    <property type="match status" value="1"/>
</dbReference>
<dbReference type="PANTHER" id="PTHR15852:SF74">
    <property type="entry name" value="PROTEIN ORANGE, CHLOROPLASTIC"/>
    <property type="match status" value="1"/>
</dbReference>
<name>ORANG_BRAOB</name>
<proteinExistence type="evidence at protein level"/>
<organism>
    <name type="scientific">Brassica oleracea var. botrytis</name>
    <name type="common">Cauliflower</name>
    <dbReference type="NCBI Taxonomy" id="3715"/>
    <lineage>
        <taxon>Eukaryota</taxon>
        <taxon>Viridiplantae</taxon>
        <taxon>Streptophyta</taxon>
        <taxon>Embryophyta</taxon>
        <taxon>Tracheophyta</taxon>
        <taxon>Spermatophyta</taxon>
        <taxon>Magnoliopsida</taxon>
        <taxon>eudicotyledons</taxon>
        <taxon>Gunneridae</taxon>
        <taxon>Pentapetalae</taxon>
        <taxon>rosids</taxon>
        <taxon>malvids</taxon>
        <taxon>Brassicales</taxon>
        <taxon>Brassicaceae</taxon>
        <taxon>Brassiceae</taxon>
        <taxon>Brassica</taxon>
    </lineage>
</organism>
<feature type="transit peptide" description="Chloroplast" evidence="1">
    <location>
        <begin position="1"/>
        <end position="54"/>
    </location>
</feature>
<feature type="chain" id="PRO_0000438014" description="Protein ORANGE, chloroplastic">
    <location>
        <begin position="55"/>
        <end position="305"/>
    </location>
</feature>
<feature type="transmembrane region" description="Helical" evidence="1">
    <location>
        <begin position="144"/>
        <end position="164"/>
    </location>
</feature>
<feature type="transmembrane region" description="Helical" evidence="1">
    <location>
        <begin position="197"/>
        <end position="217"/>
    </location>
</feature>
<feature type="repeat" description="CXXCXGXG motif" evidence="7">
    <location>
        <begin position="228"/>
        <end position="235"/>
    </location>
</feature>
<feature type="repeat" description="CXXCXXXG motif" evidence="7">
    <location>
        <begin position="239"/>
        <end position="246"/>
    </location>
</feature>
<feature type="repeat" description="CXXCXGXG motif" evidence="7">
    <location>
        <begin position="272"/>
        <end position="279"/>
    </location>
</feature>
<feature type="repeat" description="CXXCXXXG motif" evidence="7">
    <location>
        <begin position="283"/>
        <end position="290"/>
    </location>
</feature>
<feature type="region of interest" description="CR-type-like" evidence="7">
    <location>
        <begin position="206"/>
        <end position="297"/>
    </location>
</feature>
<evidence type="ECO:0000255" key="1"/>
<evidence type="ECO:0000269" key="2">
    <source>
    </source>
</evidence>
<evidence type="ECO:0000269" key="3">
    <source>
    </source>
</evidence>
<evidence type="ECO:0000269" key="4">
    <source>
    </source>
</evidence>
<evidence type="ECO:0000269" key="5">
    <source>
    </source>
</evidence>
<evidence type="ECO:0000303" key="6">
    <source>
    </source>
</evidence>
<evidence type="ECO:0000305" key="7"/>
<evidence type="ECO:0000305" key="8">
    <source>
    </source>
</evidence>
<sequence length="305" mass="33403">MSCLGRILSVSYPPDPYGSRLSVSKLSSPGRNRRLRWRFTALDSDSSSLDSDSSDKFAAGFCIIEGPETVQDFAKMQLQEIQDNIRSRRNKIFLHMEEVRRLRIQQRIRNTELGIIDEEQEHELPNFPSFIPFLPPLTAANLRVYYATCFSLIAGIILFGGLLAPTLELKLGIGGTSYKDFIQSLHLPMQLSQVDPIVASFSGGAVGVISALMVVEVNNVKQQEHKRCKYCLGTGYLACARCSSTGSLIISEPVSAIAGGNHSVSTSKTERCSNCSGAGKVMCPTCLCTGMAMASEHDPRIDPFL</sequence>
<reference key="1">
    <citation type="journal article" date="2006" name="Plant Cell">
        <title>The cauliflower Or gene encodes a DnaJ cysteine-rich domain-containing protein that mediates high levels of beta-carotene accumulation.</title>
        <authorList>
            <person name="Lu S."/>
            <person name="Van Eck J."/>
            <person name="Zhou X."/>
            <person name="Lopez A.B."/>
            <person name="O'Halloran D.M."/>
            <person name="Cosman K.M."/>
            <person name="Conlin B.J."/>
            <person name="Paolillo D.J."/>
            <person name="Garvin D.F."/>
            <person name="Vrebalov J."/>
            <person name="Kochian L.V."/>
            <person name="Kupper H."/>
            <person name="Earle E.D."/>
            <person name="Cao J."/>
            <person name="Li L."/>
        </authorList>
    </citation>
    <scope>NUCLEOTIDE SEQUENCE [MRNA]</scope>
    <scope>FUNCTION</scope>
    <scope>SUBCELLULAR LOCATION</scope>
    <scope>TISSUE SPECIFICITY</scope>
    <scope>POLYMORPHISM</scope>
</reference>
<reference key="2">
    <citation type="journal article" date="2008" name="J. Exp. Bot.">
        <title>Effect of the cauliflower Or transgene on carotenoid accumulation and chromoplast formation in transgenic potato tubers.</title>
        <authorList>
            <person name="Lopez A.B."/>
            <person name="Van Eck J."/>
            <person name="Conlin B.J."/>
            <person name="Paolillo D.J."/>
            <person name="O'Neill J."/>
            <person name="Li L."/>
        </authorList>
    </citation>
    <scope>FUNCTION</scope>
</reference>
<reference key="3">
    <citation type="journal article" date="2011" name="New Phytol.">
        <title>The cauliflower Orange gene enhances petiole elongation by suppressing expression of eukaryotic release factor 1.</title>
        <authorList>
            <person name="Zhou X."/>
            <person name="Sun T.H."/>
            <person name="Wang N."/>
            <person name="Ling H.Q."/>
            <person name="Lu S."/>
            <person name="Li L."/>
        </authorList>
    </citation>
    <scope>FUNCTION</scope>
    <scope>INTERACTION WITH ERF1-2</scope>
    <scope>SUBCELLULAR LOCATION</scope>
</reference>
<reference key="4">
    <citation type="journal article" date="2013" name="J. Plant Res.">
        <title>Or mutation leads to photo-oxidative stress responses in cauliflower (Brassica oleracea) seedlings during de-etiolation.</title>
        <authorList>
            <person name="Men X."/>
            <person name="Dong K."/>
        </authorList>
    </citation>
    <scope>FUNCTION</scope>
</reference>